<comment type="similarity">
    <text evidence="1">Belongs to the UPF0434 family.</text>
</comment>
<evidence type="ECO:0000255" key="1">
    <source>
        <dbReference type="HAMAP-Rule" id="MF_01187"/>
    </source>
</evidence>
<proteinExistence type="inferred from homology"/>
<organism>
    <name type="scientific">Shigella flexneri serotype 5b (strain 8401)</name>
    <dbReference type="NCBI Taxonomy" id="373384"/>
    <lineage>
        <taxon>Bacteria</taxon>
        <taxon>Pseudomonadati</taxon>
        <taxon>Pseudomonadota</taxon>
        <taxon>Gammaproteobacteria</taxon>
        <taxon>Enterobacterales</taxon>
        <taxon>Enterobacteriaceae</taxon>
        <taxon>Shigella</taxon>
    </lineage>
</organism>
<sequence length="60" mass="6855">MDHRLLEIIACPVCNGKLWYNQEKQELICKLDNLAFPLRDGIPVLLETEARVLTADESKS</sequence>
<name>YCAR_SHIF8</name>
<protein>
    <recommendedName>
        <fullName evidence="1">UPF0434 protein YcaR</fullName>
    </recommendedName>
</protein>
<feature type="chain" id="PRO_0000291173" description="UPF0434 protein YcaR">
    <location>
        <begin position="1"/>
        <end position="60"/>
    </location>
</feature>
<dbReference type="EMBL" id="CP000266">
    <property type="protein sequence ID" value="ABF03140.1"/>
    <property type="molecule type" value="Genomic_DNA"/>
</dbReference>
<dbReference type="RefSeq" id="WP_000350058.1">
    <property type="nucleotide sequence ID" value="NC_008258.1"/>
</dbReference>
<dbReference type="SMR" id="Q0SWZ8"/>
<dbReference type="GeneID" id="93776498"/>
<dbReference type="KEGG" id="sfv:SFV_0918"/>
<dbReference type="HOGENOM" id="CLU_155659_3_1_6"/>
<dbReference type="Proteomes" id="UP000000659">
    <property type="component" value="Chromosome"/>
</dbReference>
<dbReference type="GO" id="GO:0005829">
    <property type="term" value="C:cytosol"/>
    <property type="evidence" value="ECO:0007669"/>
    <property type="project" value="TreeGrafter"/>
</dbReference>
<dbReference type="FunFam" id="2.20.25.10:FF:000002">
    <property type="entry name" value="UPF0434 protein YcaR"/>
    <property type="match status" value="1"/>
</dbReference>
<dbReference type="Gene3D" id="2.20.25.10">
    <property type="match status" value="1"/>
</dbReference>
<dbReference type="HAMAP" id="MF_01187">
    <property type="entry name" value="UPF0434"/>
    <property type="match status" value="1"/>
</dbReference>
<dbReference type="InterPro" id="IPR005651">
    <property type="entry name" value="Trm112-like"/>
</dbReference>
<dbReference type="NCBIfam" id="NF008806">
    <property type="entry name" value="PRK11827.1"/>
    <property type="match status" value="1"/>
</dbReference>
<dbReference type="PANTHER" id="PTHR33505:SF4">
    <property type="entry name" value="PROTEIN PREY, MITOCHONDRIAL"/>
    <property type="match status" value="1"/>
</dbReference>
<dbReference type="PANTHER" id="PTHR33505">
    <property type="entry name" value="ZGC:162634"/>
    <property type="match status" value="1"/>
</dbReference>
<dbReference type="Pfam" id="PF03966">
    <property type="entry name" value="Trm112p"/>
    <property type="match status" value="1"/>
</dbReference>
<dbReference type="SUPFAM" id="SSF158997">
    <property type="entry name" value="Trm112p-like"/>
    <property type="match status" value="1"/>
</dbReference>
<reference key="1">
    <citation type="journal article" date="2006" name="BMC Genomics">
        <title>Complete genome sequence of Shigella flexneri 5b and comparison with Shigella flexneri 2a.</title>
        <authorList>
            <person name="Nie H."/>
            <person name="Yang F."/>
            <person name="Zhang X."/>
            <person name="Yang J."/>
            <person name="Chen L."/>
            <person name="Wang J."/>
            <person name="Xiong Z."/>
            <person name="Peng J."/>
            <person name="Sun L."/>
            <person name="Dong J."/>
            <person name="Xue Y."/>
            <person name="Xu X."/>
            <person name="Chen S."/>
            <person name="Yao Z."/>
            <person name="Shen Y."/>
            <person name="Jin Q."/>
        </authorList>
    </citation>
    <scope>NUCLEOTIDE SEQUENCE [LARGE SCALE GENOMIC DNA]</scope>
    <source>
        <strain>8401</strain>
    </source>
</reference>
<accession>Q0SWZ8</accession>
<gene>
    <name evidence="1" type="primary">ycaR</name>
    <name type="ordered locus">SFV_0918</name>
</gene>